<proteinExistence type="inferred from homology"/>
<accession>Q66FB6</accession>
<protein>
    <recommendedName>
        <fullName evidence="1">tRNA dimethylallyltransferase</fullName>
        <ecNumber evidence="1">2.5.1.75</ecNumber>
    </recommendedName>
    <alternativeName>
        <fullName evidence="1">Dimethylallyl diphosphate:tRNA dimethylallyltransferase</fullName>
        <shortName evidence="1">DMAPP:tRNA dimethylallyltransferase</shortName>
        <shortName evidence="1">DMATase</shortName>
    </alternativeName>
    <alternativeName>
        <fullName evidence="1">Isopentenyl-diphosphate:tRNA isopentenyltransferase</fullName>
        <shortName evidence="1">IPP transferase</shortName>
        <shortName evidence="1">IPPT</shortName>
        <shortName evidence="1">IPTase</shortName>
    </alternativeName>
</protein>
<feature type="chain" id="PRO_0000164012" description="tRNA dimethylallyltransferase">
    <location>
        <begin position="1"/>
        <end position="313"/>
    </location>
</feature>
<feature type="region of interest" description="Interaction with substrate tRNA" evidence="1">
    <location>
        <begin position="42"/>
        <end position="45"/>
    </location>
</feature>
<feature type="region of interest" description="Interaction with substrate tRNA" evidence="1">
    <location>
        <begin position="166"/>
        <end position="170"/>
    </location>
</feature>
<feature type="region of interest" description="Interaction with substrate tRNA" evidence="1">
    <location>
        <begin position="247"/>
        <end position="252"/>
    </location>
</feature>
<feature type="binding site" evidence="1">
    <location>
        <begin position="17"/>
        <end position="24"/>
    </location>
    <ligand>
        <name>ATP</name>
        <dbReference type="ChEBI" id="CHEBI:30616"/>
    </ligand>
</feature>
<feature type="binding site" evidence="1">
    <location>
        <begin position="19"/>
        <end position="24"/>
    </location>
    <ligand>
        <name>substrate</name>
    </ligand>
</feature>
<feature type="site" description="Interaction with substrate tRNA" evidence="1">
    <location>
        <position position="108"/>
    </location>
</feature>
<feature type="site" description="Interaction with substrate tRNA" evidence="1">
    <location>
        <position position="130"/>
    </location>
</feature>
<gene>
    <name evidence="1" type="primary">miaA</name>
    <name type="ordered locus">YPTB0424</name>
</gene>
<evidence type="ECO:0000255" key="1">
    <source>
        <dbReference type="HAMAP-Rule" id="MF_00185"/>
    </source>
</evidence>
<sequence length="313" mass="34785">MNDIENLDRPPAIFIMGPTASGKTALSIALRQRLPVELVSVDSALIYRGMDIGTAKPSAQELALAPHRLIDIRDPAESYSAADFRKDALKEMADITAAGRIPLLVGGTMLYFKALLDGLSPLPSADPQVRQRIEQQASELGWGALHQQLAVIDPVAAARIHPNDPQRLSRALEVFFISGKTLTELTKISGETLPYRVHQFAIAPASRELLHQRIELRFHQMLDAGFEAEARVLFDRGDLHTDLPAIRCVGYRQMWSYLSGEIDYNDMVYRGVCATRQLAKRQMTWLRGWSSVQWLDSDKPGEALDSVIQVVSA</sequence>
<reference key="1">
    <citation type="journal article" date="2004" name="Proc. Natl. Acad. Sci. U.S.A.">
        <title>Insights into the evolution of Yersinia pestis through whole-genome comparison with Yersinia pseudotuberculosis.</title>
        <authorList>
            <person name="Chain P.S.G."/>
            <person name="Carniel E."/>
            <person name="Larimer F.W."/>
            <person name="Lamerdin J."/>
            <person name="Stoutland P.O."/>
            <person name="Regala W.M."/>
            <person name="Georgescu A.M."/>
            <person name="Vergez L.M."/>
            <person name="Land M.L."/>
            <person name="Motin V.L."/>
            <person name="Brubaker R.R."/>
            <person name="Fowler J."/>
            <person name="Hinnebusch J."/>
            <person name="Marceau M."/>
            <person name="Medigue C."/>
            <person name="Simonet M."/>
            <person name="Chenal-Francisque V."/>
            <person name="Souza B."/>
            <person name="Dacheux D."/>
            <person name="Elliott J.M."/>
            <person name="Derbise A."/>
            <person name="Hauser L.J."/>
            <person name="Garcia E."/>
        </authorList>
    </citation>
    <scope>NUCLEOTIDE SEQUENCE [LARGE SCALE GENOMIC DNA]</scope>
    <source>
        <strain>IP32953</strain>
    </source>
</reference>
<comment type="function">
    <text evidence="1">Catalyzes the transfer of a dimethylallyl group onto the adenine at position 37 in tRNAs that read codons beginning with uridine, leading to the formation of N6-(dimethylallyl)adenosine (i(6)A).</text>
</comment>
<comment type="catalytic activity">
    <reaction evidence="1">
        <text>adenosine(37) in tRNA + dimethylallyl diphosphate = N(6)-dimethylallyladenosine(37) in tRNA + diphosphate</text>
        <dbReference type="Rhea" id="RHEA:26482"/>
        <dbReference type="Rhea" id="RHEA-COMP:10162"/>
        <dbReference type="Rhea" id="RHEA-COMP:10375"/>
        <dbReference type="ChEBI" id="CHEBI:33019"/>
        <dbReference type="ChEBI" id="CHEBI:57623"/>
        <dbReference type="ChEBI" id="CHEBI:74411"/>
        <dbReference type="ChEBI" id="CHEBI:74415"/>
        <dbReference type="EC" id="2.5.1.75"/>
    </reaction>
</comment>
<comment type="cofactor">
    <cofactor evidence="1">
        <name>Mg(2+)</name>
        <dbReference type="ChEBI" id="CHEBI:18420"/>
    </cofactor>
</comment>
<comment type="subunit">
    <text evidence="1">Monomer.</text>
</comment>
<comment type="similarity">
    <text evidence="1">Belongs to the IPP transferase family.</text>
</comment>
<keyword id="KW-0067">ATP-binding</keyword>
<keyword id="KW-0460">Magnesium</keyword>
<keyword id="KW-0547">Nucleotide-binding</keyword>
<keyword id="KW-0808">Transferase</keyword>
<keyword id="KW-0819">tRNA processing</keyword>
<name>MIAA_YERPS</name>
<organism>
    <name type="scientific">Yersinia pseudotuberculosis serotype I (strain IP32953)</name>
    <dbReference type="NCBI Taxonomy" id="273123"/>
    <lineage>
        <taxon>Bacteria</taxon>
        <taxon>Pseudomonadati</taxon>
        <taxon>Pseudomonadota</taxon>
        <taxon>Gammaproteobacteria</taxon>
        <taxon>Enterobacterales</taxon>
        <taxon>Yersiniaceae</taxon>
        <taxon>Yersinia</taxon>
    </lineage>
</organism>
<dbReference type="EC" id="2.5.1.75" evidence="1"/>
<dbReference type="EMBL" id="BX936398">
    <property type="protein sequence ID" value="CAH19664.1"/>
    <property type="molecule type" value="Genomic_DNA"/>
</dbReference>
<dbReference type="RefSeq" id="WP_002209149.1">
    <property type="nucleotide sequence ID" value="NZ_CP009712.1"/>
</dbReference>
<dbReference type="SMR" id="Q66FB6"/>
<dbReference type="GeneID" id="57974235"/>
<dbReference type="KEGG" id="ypo:BZ17_2140"/>
<dbReference type="KEGG" id="yps:YPTB0424"/>
<dbReference type="PATRIC" id="fig|273123.14.peg.2268"/>
<dbReference type="Proteomes" id="UP000001011">
    <property type="component" value="Chromosome"/>
</dbReference>
<dbReference type="GO" id="GO:0005524">
    <property type="term" value="F:ATP binding"/>
    <property type="evidence" value="ECO:0007669"/>
    <property type="project" value="UniProtKB-UniRule"/>
</dbReference>
<dbReference type="GO" id="GO:0052381">
    <property type="term" value="F:tRNA dimethylallyltransferase activity"/>
    <property type="evidence" value="ECO:0007669"/>
    <property type="project" value="UniProtKB-UniRule"/>
</dbReference>
<dbReference type="GO" id="GO:0006400">
    <property type="term" value="P:tRNA modification"/>
    <property type="evidence" value="ECO:0007669"/>
    <property type="project" value="TreeGrafter"/>
</dbReference>
<dbReference type="FunFam" id="1.10.20.140:FF:000001">
    <property type="entry name" value="tRNA dimethylallyltransferase"/>
    <property type="match status" value="1"/>
</dbReference>
<dbReference type="Gene3D" id="1.10.20.140">
    <property type="match status" value="1"/>
</dbReference>
<dbReference type="Gene3D" id="3.40.50.300">
    <property type="entry name" value="P-loop containing nucleotide triphosphate hydrolases"/>
    <property type="match status" value="1"/>
</dbReference>
<dbReference type="HAMAP" id="MF_00185">
    <property type="entry name" value="IPP_trans"/>
    <property type="match status" value="1"/>
</dbReference>
<dbReference type="InterPro" id="IPR039657">
    <property type="entry name" value="Dimethylallyltransferase"/>
</dbReference>
<dbReference type="InterPro" id="IPR018022">
    <property type="entry name" value="IPT"/>
</dbReference>
<dbReference type="InterPro" id="IPR027417">
    <property type="entry name" value="P-loop_NTPase"/>
</dbReference>
<dbReference type="NCBIfam" id="TIGR00174">
    <property type="entry name" value="miaA"/>
    <property type="match status" value="1"/>
</dbReference>
<dbReference type="PANTHER" id="PTHR11088">
    <property type="entry name" value="TRNA DIMETHYLALLYLTRANSFERASE"/>
    <property type="match status" value="1"/>
</dbReference>
<dbReference type="PANTHER" id="PTHR11088:SF60">
    <property type="entry name" value="TRNA DIMETHYLALLYLTRANSFERASE"/>
    <property type="match status" value="1"/>
</dbReference>
<dbReference type="Pfam" id="PF01715">
    <property type="entry name" value="IPPT"/>
    <property type="match status" value="1"/>
</dbReference>
<dbReference type="SUPFAM" id="SSF52540">
    <property type="entry name" value="P-loop containing nucleoside triphosphate hydrolases"/>
    <property type="match status" value="1"/>
</dbReference>